<organism>
    <name type="scientific">Haemophilus influenzae (strain PittGG)</name>
    <dbReference type="NCBI Taxonomy" id="374931"/>
    <lineage>
        <taxon>Bacteria</taxon>
        <taxon>Pseudomonadati</taxon>
        <taxon>Pseudomonadota</taxon>
        <taxon>Gammaproteobacteria</taxon>
        <taxon>Pasteurellales</taxon>
        <taxon>Pasteurellaceae</taxon>
        <taxon>Haemophilus</taxon>
    </lineage>
</organism>
<gene>
    <name evidence="1" type="primary">zapB</name>
    <name type="ordered locus">CGSHiGG_06615</name>
</gene>
<protein>
    <recommendedName>
        <fullName evidence="1">Cell division protein ZapB</fullName>
    </recommendedName>
</protein>
<feature type="chain" id="PRO_0000333906" description="Cell division protein ZapB">
    <location>
        <begin position="1"/>
        <end position="72"/>
    </location>
</feature>
<feature type="coiled-coil region" evidence="1">
    <location>
        <begin position="1"/>
        <end position="71"/>
    </location>
</feature>
<sequence length="72" mass="8627">MSLEILDQLEEKIKQAVETIQLLQLEVEELKEKNAESQRNIENLQTENEQLKNEHRNWQEHIRSLLGKFDNV</sequence>
<dbReference type="EMBL" id="CP000672">
    <property type="protein sequence ID" value="ABR00213.1"/>
    <property type="molecule type" value="Genomic_DNA"/>
</dbReference>
<dbReference type="SMR" id="A5UHF7"/>
<dbReference type="KEGG" id="hiq:CGSHiGG_06615"/>
<dbReference type="HOGENOM" id="CLU_171174_2_0_6"/>
<dbReference type="Proteomes" id="UP000001990">
    <property type="component" value="Chromosome"/>
</dbReference>
<dbReference type="GO" id="GO:0005737">
    <property type="term" value="C:cytoplasm"/>
    <property type="evidence" value="ECO:0007669"/>
    <property type="project" value="UniProtKB-SubCell"/>
</dbReference>
<dbReference type="GO" id="GO:0000917">
    <property type="term" value="P:division septum assembly"/>
    <property type="evidence" value="ECO:0007669"/>
    <property type="project" value="UniProtKB-KW"/>
</dbReference>
<dbReference type="GO" id="GO:0043093">
    <property type="term" value="P:FtsZ-dependent cytokinesis"/>
    <property type="evidence" value="ECO:0007669"/>
    <property type="project" value="UniProtKB-UniRule"/>
</dbReference>
<dbReference type="Gene3D" id="1.20.5.340">
    <property type="match status" value="1"/>
</dbReference>
<dbReference type="HAMAP" id="MF_01196">
    <property type="entry name" value="ZapB"/>
    <property type="match status" value="1"/>
</dbReference>
<dbReference type="InterPro" id="IPR009252">
    <property type="entry name" value="Cell_div_ZapB"/>
</dbReference>
<dbReference type="Pfam" id="PF06005">
    <property type="entry name" value="ZapB"/>
    <property type="match status" value="1"/>
</dbReference>
<reference key="1">
    <citation type="journal article" date="2007" name="Genome Biol.">
        <title>Characterization and modeling of the Haemophilus influenzae core and supragenomes based on the complete genomic sequences of Rd and 12 clinical nontypeable strains.</title>
        <authorList>
            <person name="Hogg J.S."/>
            <person name="Hu F.Z."/>
            <person name="Janto B."/>
            <person name="Boissy R."/>
            <person name="Hayes J."/>
            <person name="Keefe R."/>
            <person name="Post J.C."/>
            <person name="Ehrlich G.D."/>
        </authorList>
    </citation>
    <scope>NUCLEOTIDE SEQUENCE [LARGE SCALE GENOMIC DNA]</scope>
    <source>
        <strain>PittGG</strain>
    </source>
</reference>
<comment type="function">
    <text evidence="1">Non-essential, abundant cell division factor that is required for proper Z-ring formation. It is recruited early to the divisome by direct interaction with FtsZ, stimulating Z-ring assembly and thereby promoting cell division earlier in the cell cycle. Its recruitment to the Z-ring requires functional FtsA or ZipA.</text>
</comment>
<comment type="subunit">
    <text evidence="1">Homodimer. The ends of the coiled-coil dimer bind to each other, forming polymers. Interacts with FtsZ.</text>
</comment>
<comment type="subcellular location">
    <subcellularLocation>
        <location>Cytoplasm</location>
    </subcellularLocation>
    <text evidence="1">Localizes to the septum at mid-cell, in a FtsZ-like pattern.</text>
</comment>
<comment type="similarity">
    <text evidence="1">Belongs to the ZapB family.</text>
</comment>
<name>ZAPB_HAEIG</name>
<evidence type="ECO:0000255" key="1">
    <source>
        <dbReference type="HAMAP-Rule" id="MF_01196"/>
    </source>
</evidence>
<accession>A5UHF7</accession>
<proteinExistence type="inferred from homology"/>
<keyword id="KW-0131">Cell cycle</keyword>
<keyword id="KW-0132">Cell division</keyword>
<keyword id="KW-0175">Coiled coil</keyword>
<keyword id="KW-0963">Cytoplasm</keyword>
<keyword id="KW-0717">Septation</keyword>